<feature type="chain" id="PRO_0000072514" description="2-iminoacetate synthase">
    <location>
        <begin position="1"/>
        <end position="377"/>
    </location>
</feature>
<feature type="domain" description="Radical SAM core" evidence="2">
    <location>
        <begin position="71"/>
        <end position="301"/>
    </location>
</feature>
<feature type="binding site" evidence="1">
    <location>
        <position position="85"/>
    </location>
    <ligand>
        <name>[4Fe-4S] cluster</name>
        <dbReference type="ChEBI" id="CHEBI:49883"/>
        <note>4Fe-4S-S-AdoMet</note>
    </ligand>
</feature>
<feature type="binding site" evidence="1">
    <location>
        <position position="89"/>
    </location>
    <ligand>
        <name>[4Fe-4S] cluster</name>
        <dbReference type="ChEBI" id="CHEBI:49883"/>
        <note>4Fe-4S-S-AdoMet</note>
    </ligand>
</feature>
<feature type="binding site" evidence="1">
    <location>
        <position position="92"/>
    </location>
    <ligand>
        <name>[4Fe-4S] cluster</name>
        <dbReference type="ChEBI" id="CHEBI:49883"/>
        <note>4Fe-4S-S-AdoMet</note>
    </ligand>
</feature>
<reference key="1">
    <citation type="journal article" date="1993" name="J. Bacteriol.">
        <title>Structural genes for thiamine biosynthetic enzymes (thiCEFGH) in Escherichia coli K-12.</title>
        <authorList>
            <person name="Vander Horn P.B."/>
            <person name="Backstrom A.D."/>
            <person name="Stewart V."/>
            <person name="Begley T.P."/>
        </authorList>
    </citation>
    <scope>NUCLEOTIDE SEQUENCE [GENOMIC DNA]</scope>
    <source>
        <strain>K12</strain>
    </source>
</reference>
<reference key="2">
    <citation type="journal article" date="1993" name="Nucleic Acids Res.">
        <title>Analysis of the Escherichia coli genome. IV. DNA sequence of the region from 89.2 to 92.8 minutes.</title>
        <authorList>
            <person name="Blattner F.R."/>
            <person name="Burland V.D."/>
            <person name="Plunkett G. III"/>
            <person name="Sofia H.J."/>
            <person name="Daniels D.L."/>
        </authorList>
    </citation>
    <scope>NUCLEOTIDE SEQUENCE [LARGE SCALE GENOMIC DNA]</scope>
    <source>
        <strain>K12 / MG1655 / ATCC 47076</strain>
    </source>
</reference>
<reference key="3">
    <citation type="journal article" date="1997" name="Science">
        <title>The complete genome sequence of Escherichia coli K-12.</title>
        <authorList>
            <person name="Blattner F.R."/>
            <person name="Plunkett G. III"/>
            <person name="Bloch C.A."/>
            <person name="Perna N.T."/>
            <person name="Burland V."/>
            <person name="Riley M."/>
            <person name="Collado-Vides J."/>
            <person name="Glasner J.D."/>
            <person name="Rode C.K."/>
            <person name="Mayhew G.F."/>
            <person name="Gregor J."/>
            <person name="Davis N.W."/>
            <person name="Kirkpatrick H.A."/>
            <person name="Goeden M.A."/>
            <person name="Rose D.J."/>
            <person name="Mau B."/>
            <person name="Shao Y."/>
        </authorList>
    </citation>
    <scope>NUCLEOTIDE SEQUENCE [LARGE SCALE GENOMIC DNA]</scope>
    <source>
        <strain>K12 / MG1655 / ATCC 47076</strain>
    </source>
</reference>
<reference key="4">
    <citation type="journal article" date="2006" name="Mol. Syst. Biol.">
        <title>Highly accurate genome sequences of Escherichia coli K-12 strains MG1655 and W3110.</title>
        <authorList>
            <person name="Hayashi K."/>
            <person name="Morooka N."/>
            <person name="Yamamoto Y."/>
            <person name="Fujita K."/>
            <person name="Isono K."/>
            <person name="Choi S."/>
            <person name="Ohtsubo E."/>
            <person name="Baba T."/>
            <person name="Wanner B.L."/>
            <person name="Mori H."/>
            <person name="Horiuchi T."/>
        </authorList>
    </citation>
    <scope>NUCLEOTIDE SEQUENCE [LARGE SCALE GENOMIC DNA]</scope>
    <source>
        <strain>K12 / W3110 / ATCC 27325 / DSM 5911</strain>
    </source>
</reference>
<reference key="5">
    <citation type="journal article" date="1998" name="Protein Sci.">
        <title>Efficient sequence analysis of the six gene products (7-74 kDa) from the Escherichia coli thiamin biosynthetic operon by tandem high-resolution mass spectrometry.</title>
        <authorList>
            <person name="Kelleher N.L."/>
            <person name="Taylor S.V."/>
            <person name="Grannis D."/>
            <person name="Kinsland C."/>
            <person name="Chiu H.-J."/>
            <person name="Begley T.P."/>
            <person name="McLafferty F.W."/>
        </authorList>
    </citation>
    <scope>PROTEIN SEQUENCE OF 41-47</scope>
    <scope>IDENTIFICATION BY MASS SPECTROMETRY</scope>
</reference>
<reference key="6">
    <citation type="journal article" date="2003" name="FEBS Lett.">
        <title>Thiamine biosynthesis in Escherichia coli: isolation and initial characterisation of the ThiGH complex.</title>
        <authorList>
            <person name="Leonardi R."/>
            <person name="Fairhurst S.A."/>
            <person name="Kriek M."/>
            <person name="Lowe D.J."/>
            <person name="Roach P.L."/>
        </authorList>
    </citation>
    <scope>INTERACTION WITH THIG</scope>
    <scope>SUBUNIT</scope>
    <scope>EPR SPECTROSCOPY</scope>
    <scope>COFACTOR</scope>
</reference>
<reference key="7">
    <citation type="journal article" date="2007" name="Angew. Chem. Int. Ed.">
        <title>Thiamine biosynthesis in Escherichia coli: identification of the intermediate and by-product derived from tyrosine.</title>
        <authorList>
            <person name="Kriek M."/>
            <person name="Martins F."/>
            <person name="Challand M.R."/>
            <person name="Croft A."/>
            <person name="Roach P.L."/>
        </authorList>
    </citation>
    <scope>FUNCTION</scope>
    <scope>CATALYTIC ACTIVITY</scope>
    <scope>REACTION PRODUCTS</scope>
    <scope>REACTION MECHANISM</scope>
</reference>
<reference key="8">
    <citation type="journal article" date="2007" name="J. Biol. Chem.">
        <title>Thiazole synthase from Escherichia coli: an investigation of the substrates and purified proteins required for activity in vitro.</title>
        <authorList>
            <person name="Kriek M."/>
            <person name="Martins F."/>
            <person name="Leonardi R."/>
            <person name="Fairhurst S.A."/>
            <person name="Lowe D.J."/>
            <person name="Roach P.L."/>
        </authorList>
    </citation>
    <scope>FUNCTION</scope>
    <scope>EPR SPECTROSCOPY</scope>
    <scope>COFACTOR</scope>
    <scope>CATALYTIC ACTIVITY</scope>
    <scope>REACTION MECHANISM</scope>
</reference>
<sequence>MKTFSDRWRQLDWDDIRLRINGKTAADVERALNASQLTRDDMMALLSPAASGYLEQLAQRAQRLTRQRFGNTVSFYVPLYLSNLCANDCTYCGFSMSNRIKRKTLDEADIARESAAIREMGFEHLLLVTGEHQAKVGMDYFRRHLPALREQFSSLQMEVQPLAETEYAELKQLGLDGVMVYQETYHEATYARHHLKGKKQDFFWRLETPDRLGRAGIDKIGLGALIGLSDNWRVDSYMVAEHLLWLQQHYWQSRYSVSFPRLRPCTGGIEPASIMDERQLVQTICAFRLLAPEIELSLSTRESPWFRDRVIPLAINNVSAFSKTQPGGYADNHPELEQFSPHDDRRPEAVAAALTAQGLQPVWKDWDSYLGRASQRL</sequence>
<dbReference type="EC" id="4.1.99.19" evidence="4 5"/>
<dbReference type="EMBL" id="M88701">
    <property type="protein sequence ID" value="AAB95619.1"/>
    <property type="molecule type" value="Genomic_DNA"/>
</dbReference>
<dbReference type="EMBL" id="U00006">
    <property type="protein sequence ID" value="AAC43088.1"/>
    <property type="molecule type" value="Genomic_DNA"/>
</dbReference>
<dbReference type="EMBL" id="U00096">
    <property type="protein sequence ID" value="AAC76964.1"/>
    <property type="molecule type" value="Genomic_DNA"/>
</dbReference>
<dbReference type="EMBL" id="AP009048">
    <property type="protein sequence ID" value="BAE77330.1"/>
    <property type="molecule type" value="Genomic_DNA"/>
</dbReference>
<dbReference type="PIR" id="S35121">
    <property type="entry name" value="S35121"/>
</dbReference>
<dbReference type="RefSeq" id="NP_418417.1">
    <property type="nucleotide sequence ID" value="NC_000913.3"/>
</dbReference>
<dbReference type="RefSeq" id="WP_000847447.1">
    <property type="nucleotide sequence ID" value="NZ_SSZK01000047.1"/>
</dbReference>
<dbReference type="SMR" id="P30140"/>
<dbReference type="BioGRID" id="4262909">
    <property type="interactions" value="16"/>
</dbReference>
<dbReference type="ComplexPortal" id="CPX-2135">
    <property type="entry name" value="thiG-thiH thiazole phosphate synthase complex"/>
</dbReference>
<dbReference type="DIP" id="DIP-6869N"/>
<dbReference type="FunCoup" id="P30140">
    <property type="interactions" value="179"/>
</dbReference>
<dbReference type="IntAct" id="P30140">
    <property type="interactions" value="4"/>
</dbReference>
<dbReference type="STRING" id="511145.b3990"/>
<dbReference type="PaxDb" id="511145-b3990"/>
<dbReference type="EnsemblBacteria" id="AAC76964">
    <property type="protein sequence ID" value="AAC76964"/>
    <property type="gene ID" value="b3990"/>
</dbReference>
<dbReference type="GeneID" id="948494"/>
<dbReference type="KEGG" id="ecj:JW3953"/>
<dbReference type="KEGG" id="eco:b3990"/>
<dbReference type="KEGG" id="ecoc:C3026_21550"/>
<dbReference type="PATRIC" id="fig|1411691.4.peg.2722"/>
<dbReference type="EchoBASE" id="EB1548"/>
<dbReference type="eggNOG" id="COG0502">
    <property type="taxonomic scope" value="Bacteria"/>
</dbReference>
<dbReference type="HOGENOM" id="CLU_046249_1_0_6"/>
<dbReference type="InParanoid" id="P30140"/>
<dbReference type="OMA" id="YLAMEVQ"/>
<dbReference type="OrthoDB" id="9801120at2"/>
<dbReference type="PhylomeDB" id="P30140"/>
<dbReference type="BioCyc" id="EcoCyc:THIH-MONOMER"/>
<dbReference type="BioCyc" id="MetaCyc:THIH-MONOMER"/>
<dbReference type="BRENDA" id="4.1.99.19">
    <property type="organism ID" value="2026"/>
</dbReference>
<dbReference type="UniPathway" id="UPA00060"/>
<dbReference type="PRO" id="PR:P30140"/>
<dbReference type="Proteomes" id="UP000000625">
    <property type="component" value="Chromosome"/>
</dbReference>
<dbReference type="GO" id="GO:1902508">
    <property type="term" value="C:2-iminoacetate synthase complex"/>
    <property type="evidence" value="ECO:0000353"/>
    <property type="project" value="ComplexPortal"/>
</dbReference>
<dbReference type="GO" id="GO:0036355">
    <property type="term" value="F:2-iminoacetate synthase activity"/>
    <property type="evidence" value="ECO:0000314"/>
    <property type="project" value="EcoCyc"/>
</dbReference>
<dbReference type="GO" id="GO:0051539">
    <property type="term" value="F:4 iron, 4 sulfur cluster binding"/>
    <property type="evidence" value="ECO:0000314"/>
    <property type="project" value="EcoCyc"/>
</dbReference>
<dbReference type="GO" id="GO:0005506">
    <property type="term" value="F:iron ion binding"/>
    <property type="evidence" value="ECO:0007669"/>
    <property type="project" value="InterPro"/>
</dbReference>
<dbReference type="GO" id="GO:0006974">
    <property type="term" value="P:DNA damage response"/>
    <property type="evidence" value="ECO:0000270"/>
    <property type="project" value="EcoliWiki"/>
</dbReference>
<dbReference type="GO" id="GO:0009228">
    <property type="term" value="P:thiamine biosynthetic process"/>
    <property type="evidence" value="ECO:0000315"/>
    <property type="project" value="EcoCyc"/>
</dbReference>
<dbReference type="GO" id="GO:0009229">
    <property type="term" value="P:thiamine diphosphate biosynthetic process"/>
    <property type="evidence" value="ECO:0000314"/>
    <property type="project" value="ComplexPortal"/>
</dbReference>
<dbReference type="CDD" id="cd01335">
    <property type="entry name" value="Radical_SAM"/>
    <property type="match status" value="1"/>
</dbReference>
<dbReference type="FunFam" id="3.20.20.70:FF:000122">
    <property type="entry name" value="2-iminoacetate synthase ThiH"/>
    <property type="match status" value="1"/>
</dbReference>
<dbReference type="Gene3D" id="3.20.20.70">
    <property type="entry name" value="Aldolase class I"/>
    <property type="match status" value="1"/>
</dbReference>
<dbReference type="InterPro" id="IPR013785">
    <property type="entry name" value="Aldolase_TIM"/>
</dbReference>
<dbReference type="InterPro" id="IPR010722">
    <property type="entry name" value="BATS_dom"/>
</dbReference>
<dbReference type="InterPro" id="IPR007197">
    <property type="entry name" value="rSAM"/>
</dbReference>
<dbReference type="InterPro" id="IPR012726">
    <property type="entry name" value="ThiH"/>
</dbReference>
<dbReference type="InterPro" id="IPR034428">
    <property type="entry name" value="ThiH/NoCL/HydG-like"/>
</dbReference>
<dbReference type="NCBIfam" id="TIGR02351">
    <property type="entry name" value="thiH"/>
    <property type="match status" value="1"/>
</dbReference>
<dbReference type="PANTHER" id="PTHR43583">
    <property type="entry name" value="2-IMINOACETATE SYNTHASE"/>
    <property type="match status" value="1"/>
</dbReference>
<dbReference type="PANTHER" id="PTHR43583:SF1">
    <property type="entry name" value="2-IMINOACETATE SYNTHASE"/>
    <property type="match status" value="1"/>
</dbReference>
<dbReference type="Pfam" id="PF06968">
    <property type="entry name" value="BATS"/>
    <property type="match status" value="1"/>
</dbReference>
<dbReference type="Pfam" id="PF04055">
    <property type="entry name" value="Radical_SAM"/>
    <property type="match status" value="1"/>
</dbReference>
<dbReference type="SFLD" id="SFLDF00301">
    <property type="entry name" value="2-iminoacetate_synthase_(ThiH)"/>
    <property type="match status" value="1"/>
</dbReference>
<dbReference type="SFLD" id="SFLDS00029">
    <property type="entry name" value="Radical_SAM"/>
    <property type="match status" value="1"/>
</dbReference>
<dbReference type="SMART" id="SM00876">
    <property type="entry name" value="BATS"/>
    <property type="match status" value="1"/>
</dbReference>
<dbReference type="SUPFAM" id="SSF102114">
    <property type="entry name" value="Radical SAM enzymes"/>
    <property type="match status" value="1"/>
</dbReference>
<dbReference type="PROSITE" id="PS51918">
    <property type="entry name" value="RADICAL_SAM"/>
    <property type="match status" value="1"/>
</dbReference>
<name>THIH_ECOLI</name>
<accession>P30140</accession>
<accession>Q2M8S6</accession>
<protein>
    <recommendedName>
        <fullName>2-iminoacetate synthase</fullName>
        <ecNumber evidence="4 5">4.1.99.19</ecNumber>
    </recommendedName>
    <alternativeName>
        <fullName>Dehydroglycine synthase</fullName>
    </alternativeName>
    <alternativeName>
        <fullName>Tyrosine lyase</fullName>
    </alternativeName>
</protein>
<keyword id="KW-0004">4Fe-4S</keyword>
<keyword id="KW-0903">Direct protein sequencing</keyword>
<keyword id="KW-0408">Iron</keyword>
<keyword id="KW-0411">Iron-sulfur</keyword>
<keyword id="KW-0456">Lyase</keyword>
<keyword id="KW-0479">Metal-binding</keyword>
<keyword id="KW-0521">NADP</keyword>
<keyword id="KW-1185">Reference proteome</keyword>
<keyword id="KW-0949">S-adenosyl-L-methionine</keyword>
<keyword id="KW-0784">Thiamine biosynthesis</keyword>
<gene>
    <name type="primary">thiH</name>
    <name type="ordered locus">b3990</name>
    <name type="ordered locus">JW3953</name>
</gene>
<evidence type="ECO:0000250" key="1"/>
<evidence type="ECO:0000255" key="2">
    <source>
        <dbReference type="PROSITE-ProRule" id="PRU01266"/>
    </source>
</evidence>
<evidence type="ECO:0000269" key="3">
    <source>
    </source>
</evidence>
<evidence type="ECO:0000269" key="4">
    <source>
    </source>
</evidence>
<evidence type="ECO:0000269" key="5">
    <source>
    </source>
</evidence>
<evidence type="ECO:0000305" key="6"/>
<comment type="function">
    <text evidence="4 5">Catalyzes the radical-mediated cleavage of tyrosine to 2-iminoacetate and 4-cresol.</text>
</comment>
<comment type="catalytic activity">
    <reaction evidence="4 5">
        <text>L-tyrosine + S-adenosyl-L-methionine + NADPH = 2-iminoacetate + 4-methylphenol + 5'-deoxyadenosine + L-methionine + NADP(+)</text>
        <dbReference type="Rhea" id="RHEA:26361"/>
        <dbReference type="ChEBI" id="CHEBI:17319"/>
        <dbReference type="ChEBI" id="CHEBI:17847"/>
        <dbReference type="ChEBI" id="CHEBI:57783"/>
        <dbReference type="ChEBI" id="CHEBI:57844"/>
        <dbReference type="ChEBI" id="CHEBI:58315"/>
        <dbReference type="ChEBI" id="CHEBI:58349"/>
        <dbReference type="ChEBI" id="CHEBI:59789"/>
        <dbReference type="ChEBI" id="CHEBI:77846"/>
        <dbReference type="EC" id="4.1.99.19"/>
    </reaction>
</comment>
<comment type="cofactor">
    <cofactor evidence="3 4">
        <name>[4Fe-4S] cluster</name>
        <dbReference type="ChEBI" id="CHEBI:49883"/>
    </cofactor>
    <text evidence="3 4">Binds 1 [4Fe-4S] cluster per subunit. The cluster is coordinated with 3 cysteines and an exchangeable S-adenosyl-L-methionine.</text>
</comment>
<comment type="pathway">
    <text>Cofactor biosynthesis; thiamine diphosphate biosynthesis.</text>
</comment>
<comment type="subunit">
    <text evidence="3">Forms a heterodimer with ThiG.</text>
</comment>
<comment type="interaction">
    <interactant intactId="EBI-1125553">
        <id>P30140</id>
    </interactant>
    <interactant intactId="EBI-547059">
        <id>P30139</id>
        <label>thiG</label>
    </interactant>
    <organismsDiffer>false</organismsDiffer>
    <experiments>2</experiments>
</comment>
<comment type="miscellaneous">
    <text>The product 2-iminoacetate hydrates in vitro to yield glyoxylate and ammonium.</text>
</comment>
<comment type="similarity">
    <text evidence="6">Belongs to the radical SAM superfamily. ThiH family.</text>
</comment>
<proteinExistence type="evidence at protein level"/>
<organism>
    <name type="scientific">Escherichia coli (strain K12)</name>
    <dbReference type="NCBI Taxonomy" id="83333"/>
    <lineage>
        <taxon>Bacteria</taxon>
        <taxon>Pseudomonadati</taxon>
        <taxon>Pseudomonadota</taxon>
        <taxon>Gammaproteobacteria</taxon>
        <taxon>Enterobacterales</taxon>
        <taxon>Enterobacteriaceae</taxon>
        <taxon>Escherichia</taxon>
    </lineage>
</organism>